<comment type="function">
    <text evidence="1">The beta subunit is responsible for the synthesis of L-tryptophan from indole and L-serine.</text>
</comment>
<comment type="catalytic activity">
    <reaction>
        <text>(1S,2R)-1-C-(indol-3-yl)glycerol 3-phosphate + L-serine = D-glyceraldehyde 3-phosphate + L-tryptophan + H2O</text>
        <dbReference type="Rhea" id="RHEA:10532"/>
        <dbReference type="ChEBI" id="CHEBI:15377"/>
        <dbReference type="ChEBI" id="CHEBI:33384"/>
        <dbReference type="ChEBI" id="CHEBI:57912"/>
        <dbReference type="ChEBI" id="CHEBI:58866"/>
        <dbReference type="ChEBI" id="CHEBI:59776"/>
        <dbReference type="EC" id="4.2.1.20"/>
    </reaction>
</comment>
<comment type="cofactor">
    <cofactor evidence="1">
        <name>pyridoxal 5'-phosphate</name>
        <dbReference type="ChEBI" id="CHEBI:597326"/>
    </cofactor>
</comment>
<comment type="pathway">
    <text>Amino-acid biosynthesis; L-tryptophan biosynthesis; L-tryptophan from chorismate: step 5/5.</text>
</comment>
<comment type="subunit">
    <text evidence="1">Tetramer of two alpha and two beta chains.</text>
</comment>
<comment type="similarity">
    <text evidence="2">Belongs to the TrpB family.</text>
</comment>
<dbReference type="EC" id="4.2.1.20"/>
<dbReference type="EMBL" id="AL583921">
    <property type="protein sequence ID" value="CAC31653.1"/>
    <property type="molecule type" value="Genomic_DNA"/>
</dbReference>
<dbReference type="PIR" id="B87068">
    <property type="entry name" value="B87068"/>
</dbReference>
<dbReference type="RefSeq" id="NP_301917.1">
    <property type="nucleotide sequence ID" value="NC_002677.1"/>
</dbReference>
<dbReference type="RefSeq" id="WP_010908238.1">
    <property type="nucleotide sequence ID" value="NC_002677.1"/>
</dbReference>
<dbReference type="SMR" id="Q9CC54"/>
<dbReference type="STRING" id="272631.gene:17575104"/>
<dbReference type="KEGG" id="mle:ML1272"/>
<dbReference type="PATRIC" id="fig|272631.5.peg.2336"/>
<dbReference type="Leproma" id="ML1272"/>
<dbReference type="eggNOG" id="COG0133">
    <property type="taxonomic scope" value="Bacteria"/>
</dbReference>
<dbReference type="HOGENOM" id="CLU_016734_3_1_11"/>
<dbReference type="OrthoDB" id="9766131at2"/>
<dbReference type="UniPathway" id="UPA00035">
    <property type="reaction ID" value="UER00044"/>
</dbReference>
<dbReference type="Proteomes" id="UP000000806">
    <property type="component" value="Chromosome"/>
</dbReference>
<dbReference type="GO" id="GO:0005737">
    <property type="term" value="C:cytoplasm"/>
    <property type="evidence" value="ECO:0007669"/>
    <property type="project" value="TreeGrafter"/>
</dbReference>
<dbReference type="GO" id="GO:0004834">
    <property type="term" value="F:tryptophan synthase activity"/>
    <property type="evidence" value="ECO:0007669"/>
    <property type="project" value="UniProtKB-UniRule"/>
</dbReference>
<dbReference type="CDD" id="cd06446">
    <property type="entry name" value="Trp-synth_B"/>
    <property type="match status" value="1"/>
</dbReference>
<dbReference type="FunFam" id="3.40.50.1100:FF:000001">
    <property type="entry name" value="Tryptophan synthase beta chain"/>
    <property type="match status" value="1"/>
</dbReference>
<dbReference type="FunFam" id="3.40.50.1100:FF:000004">
    <property type="entry name" value="Tryptophan synthase beta chain"/>
    <property type="match status" value="1"/>
</dbReference>
<dbReference type="Gene3D" id="3.40.50.1100">
    <property type="match status" value="2"/>
</dbReference>
<dbReference type="HAMAP" id="MF_00133">
    <property type="entry name" value="Trp_synth_beta"/>
    <property type="match status" value="1"/>
</dbReference>
<dbReference type="InterPro" id="IPR006653">
    <property type="entry name" value="Trp_synth_b_CS"/>
</dbReference>
<dbReference type="InterPro" id="IPR006654">
    <property type="entry name" value="Trp_synth_beta"/>
</dbReference>
<dbReference type="InterPro" id="IPR023026">
    <property type="entry name" value="Trp_synth_beta/beta-like"/>
</dbReference>
<dbReference type="InterPro" id="IPR001926">
    <property type="entry name" value="TrpB-like_PALP"/>
</dbReference>
<dbReference type="InterPro" id="IPR036052">
    <property type="entry name" value="TrpB-like_PALP_sf"/>
</dbReference>
<dbReference type="NCBIfam" id="TIGR00263">
    <property type="entry name" value="trpB"/>
    <property type="match status" value="1"/>
</dbReference>
<dbReference type="PANTHER" id="PTHR48077:SF3">
    <property type="entry name" value="TRYPTOPHAN SYNTHASE"/>
    <property type="match status" value="1"/>
</dbReference>
<dbReference type="PANTHER" id="PTHR48077">
    <property type="entry name" value="TRYPTOPHAN SYNTHASE-RELATED"/>
    <property type="match status" value="1"/>
</dbReference>
<dbReference type="Pfam" id="PF00291">
    <property type="entry name" value="PALP"/>
    <property type="match status" value="1"/>
</dbReference>
<dbReference type="PIRSF" id="PIRSF001413">
    <property type="entry name" value="Trp_syn_beta"/>
    <property type="match status" value="1"/>
</dbReference>
<dbReference type="SUPFAM" id="SSF53686">
    <property type="entry name" value="Tryptophan synthase beta subunit-like PLP-dependent enzymes"/>
    <property type="match status" value="1"/>
</dbReference>
<dbReference type="PROSITE" id="PS00168">
    <property type="entry name" value="TRP_SYNTHASE_BETA"/>
    <property type="match status" value="1"/>
</dbReference>
<proteinExistence type="inferred from homology"/>
<reference key="1">
    <citation type="journal article" date="2001" name="Nature">
        <title>Massive gene decay in the leprosy bacillus.</title>
        <authorList>
            <person name="Cole S.T."/>
            <person name="Eiglmeier K."/>
            <person name="Parkhill J."/>
            <person name="James K.D."/>
            <person name="Thomson N.R."/>
            <person name="Wheeler P.R."/>
            <person name="Honore N."/>
            <person name="Garnier T."/>
            <person name="Churcher C.M."/>
            <person name="Harris D.E."/>
            <person name="Mungall K.L."/>
            <person name="Basham D."/>
            <person name="Brown D."/>
            <person name="Chillingworth T."/>
            <person name="Connor R."/>
            <person name="Davies R.M."/>
            <person name="Devlin K."/>
            <person name="Duthoy S."/>
            <person name="Feltwell T."/>
            <person name="Fraser A."/>
            <person name="Hamlin N."/>
            <person name="Holroyd S."/>
            <person name="Hornsby T."/>
            <person name="Jagels K."/>
            <person name="Lacroix C."/>
            <person name="Maclean J."/>
            <person name="Moule S."/>
            <person name="Murphy L.D."/>
            <person name="Oliver K."/>
            <person name="Quail M.A."/>
            <person name="Rajandream M.A."/>
            <person name="Rutherford K.M."/>
            <person name="Rutter S."/>
            <person name="Seeger K."/>
            <person name="Simon S."/>
            <person name="Simmonds M."/>
            <person name="Skelton J."/>
            <person name="Squares R."/>
            <person name="Squares S."/>
            <person name="Stevens K."/>
            <person name="Taylor K."/>
            <person name="Whitehead S."/>
            <person name="Woodward J.R."/>
            <person name="Barrell B.G."/>
        </authorList>
    </citation>
    <scope>NUCLEOTIDE SEQUENCE [LARGE SCALE GENOMIC DNA]</scope>
    <source>
        <strain>TN</strain>
    </source>
</reference>
<protein>
    <recommendedName>
        <fullName>Tryptophan synthase beta chain</fullName>
        <ecNumber>4.2.1.20</ecNumber>
    </recommendedName>
</protein>
<accession>Q9CC54</accession>
<organism>
    <name type="scientific">Mycobacterium leprae (strain TN)</name>
    <dbReference type="NCBI Taxonomy" id="272631"/>
    <lineage>
        <taxon>Bacteria</taxon>
        <taxon>Bacillati</taxon>
        <taxon>Actinomycetota</taxon>
        <taxon>Actinomycetes</taxon>
        <taxon>Mycobacteriales</taxon>
        <taxon>Mycobacteriaceae</taxon>
        <taxon>Mycobacterium</taxon>
    </lineage>
</organism>
<feature type="chain" id="PRO_0000098968" description="Tryptophan synthase beta chain">
    <location>
        <begin position="1"/>
        <end position="417"/>
    </location>
</feature>
<feature type="modified residue" description="N6-(pyridoxal phosphate)lysine" evidence="1">
    <location>
        <position position="108"/>
    </location>
</feature>
<keyword id="KW-0028">Amino-acid biosynthesis</keyword>
<keyword id="KW-0057">Aromatic amino acid biosynthesis</keyword>
<keyword id="KW-0456">Lyase</keyword>
<keyword id="KW-0663">Pyridoxal phosphate</keyword>
<keyword id="KW-1185">Reference proteome</keyword>
<keyword id="KW-0822">Tryptophan biosynthesis</keyword>
<gene>
    <name type="primary">trpB</name>
    <name type="ordered locus">ML1272</name>
</gene>
<sequence>MMPNLSCFSVAISEPTCHDPDSGGHFGGPDGYGGRYVPEALMAVIEEVTAAYEKERVNQDFLDLLDKLQANYAGRPSPLYEATRLSEYAGSVRIFLKREDLNHTGSHKINNVLGQTLLAQRMGKTRVIAETGAGQHGVATATACALFGLDCVIYMGALDTARQALNVARMRLLGAEVVSVETGSRTLKDAINDAFRDWVTNADNTYYCFGTASGPHPFPTMVRDLQRVIGLETRRQIQYQAGRLPDAVTACIGGGSNAIGIFHAFLDDPGVRLVGFEAAGDGVETGRHAATLTGGLPGAFQGTFSYLLQDEDGQTIESHSIAAGLDYPGVGPEHAWLRETGRAEYQPITDSEAIEAFRLLCRTEGILPALESAHAVAGALKLASEIGKGAVIVVNLSGRGDKDIEAAAKWFGLLGTR</sequence>
<evidence type="ECO:0000250" key="1"/>
<evidence type="ECO:0000305" key="2"/>
<name>TRPB_MYCLE</name>